<accession>Q2KU33</accession>
<proteinExistence type="inferred from homology"/>
<feature type="chain" id="PRO_0000370902" description="ATP synthase subunit delta">
    <location>
        <begin position="1"/>
        <end position="179"/>
    </location>
</feature>
<sequence>MAELSTVARPYAEALFGAACDDKAGLVSWADLVGELAQVAANADVREAMTDPRLNDAQRAQVFTSLIKSPLPQAARNFIDLLVQNDRLLLLPIIATQFVDLKNRYEGTAQAEITSAFELSDAQVKELIAALEVKFGLKLKPQVTIDPSLIGGVRVAVGDQVLDTSVKAQLARLRDTLAA</sequence>
<evidence type="ECO:0000255" key="1">
    <source>
        <dbReference type="HAMAP-Rule" id="MF_01416"/>
    </source>
</evidence>
<name>ATPD_BORA1</name>
<reference key="1">
    <citation type="journal article" date="2006" name="J. Bacteriol.">
        <title>Comparison of the genome sequence of the poultry pathogen Bordetella avium with those of B. bronchiseptica, B. pertussis, and B. parapertussis reveals extensive diversity in surface structures associated with host interaction.</title>
        <authorList>
            <person name="Sebaihia M."/>
            <person name="Preston A."/>
            <person name="Maskell D.J."/>
            <person name="Kuzmiak H."/>
            <person name="Connell T.D."/>
            <person name="King N.D."/>
            <person name="Orndorff P.E."/>
            <person name="Miyamoto D.M."/>
            <person name="Thomson N.R."/>
            <person name="Harris D."/>
            <person name="Goble A."/>
            <person name="Lord A."/>
            <person name="Murphy L."/>
            <person name="Quail M.A."/>
            <person name="Rutter S."/>
            <person name="Squares R."/>
            <person name="Squares S."/>
            <person name="Woodward J."/>
            <person name="Parkhill J."/>
            <person name="Temple L.M."/>
        </authorList>
    </citation>
    <scope>NUCLEOTIDE SEQUENCE [LARGE SCALE GENOMIC DNA]</scope>
    <source>
        <strain>197N</strain>
    </source>
</reference>
<organism>
    <name type="scientific">Bordetella avium (strain 197N)</name>
    <dbReference type="NCBI Taxonomy" id="360910"/>
    <lineage>
        <taxon>Bacteria</taxon>
        <taxon>Pseudomonadati</taxon>
        <taxon>Pseudomonadota</taxon>
        <taxon>Betaproteobacteria</taxon>
        <taxon>Burkholderiales</taxon>
        <taxon>Alcaligenaceae</taxon>
        <taxon>Bordetella</taxon>
    </lineage>
</organism>
<protein>
    <recommendedName>
        <fullName evidence="1">ATP synthase subunit delta</fullName>
    </recommendedName>
    <alternativeName>
        <fullName evidence="1">ATP synthase F(1) sector subunit delta</fullName>
    </alternativeName>
    <alternativeName>
        <fullName evidence="1">F-type ATPase subunit delta</fullName>
        <shortName evidence="1">F-ATPase subunit delta</shortName>
    </alternativeName>
</protein>
<comment type="function">
    <text evidence="1">F(1)F(0) ATP synthase produces ATP from ADP in the presence of a proton or sodium gradient. F-type ATPases consist of two structural domains, F(1) containing the extramembraneous catalytic core and F(0) containing the membrane proton channel, linked together by a central stalk and a peripheral stalk. During catalysis, ATP synthesis in the catalytic domain of F(1) is coupled via a rotary mechanism of the central stalk subunits to proton translocation.</text>
</comment>
<comment type="function">
    <text evidence="1">This protein is part of the stalk that links CF(0) to CF(1). It either transmits conformational changes from CF(0) to CF(1) or is implicated in proton conduction.</text>
</comment>
<comment type="subunit">
    <text evidence="1">F-type ATPases have 2 components, F(1) - the catalytic core - and F(0) - the membrane proton channel. F(1) has five subunits: alpha(3), beta(3), gamma(1), delta(1), epsilon(1). F(0) has three main subunits: a(1), b(2) and c(10-14). The alpha and beta chains form an alternating ring which encloses part of the gamma chain. F(1) is attached to F(0) by a central stalk formed by the gamma and epsilon chains, while a peripheral stalk is formed by the delta and b chains.</text>
</comment>
<comment type="subcellular location">
    <subcellularLocation>
        <location evidence="1">Cell inner membrane</location>
        <topology evidence="1">Peripheral membrane protein</topology>
    </subcellularLocation>
</comment>
<comment type="similarity">
    <text evidence="1">Belongs to the ATPase delta chain family.</text>
</comment>
<dbReference type="EMBL" id="AM167904">
    <property type="protein sequence ID" value="CAJ50827.1"/>
    <property type="molecule type" value="Genomic_DNA"/>
</dbReference>
<dbReference type="RefSeq" id="WP_012418855.1">
    <property type="nucleotide sequence ID" value="NC_010645.1"/>
</dbReference>
<dbReference type="SMR" id="Q2KU33"/>
<dbReference type="STRING" id="360910.BAV3217"/>
<dbReference type="GeneID" id="92933525"/>
<dbReference type="KEGG" id="bav:BAV3217"/>
<dbReference type="eggNOG" id="COG0712">
    <property type="taxonomic scope" value="Bacteria"/>
</dbReference>
<dbReference type="HOGENOM" id="CLU_085114_3_0_4"/>
<dbReference type="OrthoDB" id="9816221at2"/>
<dbReference type="Proteomes" id="UP000001977">
    <property type="component" value="Chromosome"/>
</dbReference>
<dbReference type="GO" id="GO:0005886">
    <property type="term" value="C:plasma membrane"/>
    <property type="evidence" value="ECO:0007669"/>
    <property type="project" value="UniProtKB-SubCell"/>
</dbReference>
<dbReference type="GO" id="GO:0045259">
    <property type="term" value="C:proton-transporting ATP synthase complex"/>
    <property type="evidence" value="ECO:0007669"/>
    <property type="project" value="UniProtKB-KW"/>
</dbReference>
<dbReference type="GO" id="GO:0046933">
    <property type="term" value="F:proton-transporting ATP synthase activity, rotational mechanism"/>
    <property type="evidence" value="ECO:0007669"/>
    <property type="project" value="UniProtKB-UniRule"/>
</dbReference>
<dbReference type="Gene3D" id="1.10.520.20">
    <property type="entry name" value="N-terminal domain of the delta subunit of the F1F0-ATP synthase"/>
    <property type="match status" value="1"/>
</dbReference>
<dbReference type="HAMAP" id="MF_01416">
    <property type="entry name" value="ATP_synth_delta_bact"/>
    <property type="match status" value="1"/>
</dbReference>
<dbReference type="InterPro" id="IPR026015">
    <property type="entry name" value="ATP_synth_OSCP/delta_N_sf"/>
</dbReference>
<dbReference type="InterPro" id="IPR000711">
    <property type="entry name" value="ATPase_OSCP/dsu"/>
</dbReference>
<dbReference type="NCBIfam" id="TIGR01145">
    <property type="entry name" value="ATP_synt_delta"/>
    <property type="match status" value="1"/>
</dbReference>
<dbReference type="NCBIfam" id="NF004402">
    <property type="entry name" value="PRK05758.2-2"/>
    <property type="match status" value="1"/>
</dbReference>
<dbReference type="PANTHER" id="PTHR11910">
    <property type="entry name" value="ATP SYNTHASE DELTA CHAIN"/>
    <property type="match status" value="1"/>
</dbReference>
<dbReference type="Pfam" id="PF00213">
    <property type="entry name" value="OSCP"/>
    <property type="match status" value="1"/>
</dbReference>
<dbReference type="PRINTS" id="PR00125">
    <property type="entry name" value="ATPASEDELTA"/>
</dbReference>
<dbReference type="SUPFAM" id="SSF47928">
    <property type="entry name" value="N-terminal domain of the delta subunit of the F1F0-ATP synthase"/>
    <property type="match status" value="1"/>
</dbReference>
<gene>
    <name evidence="1" type="primary">atpH</name>
    <name type="ordered locus">BAV3217</name>
</gene>
<keyword id="KW-0066">ATP synthesis</keyword>
<keyword id="KW-0997">Cell inner membrane</keyword>
<keyword id="KW-1003">Cell membrane</keyword>
<keyword id="KW-0139">CF(1)</keyword>
<keyword id="KW-0375">Hydrogen ion transport</keyword>
<keyword id="KW-0406">Ion transport</keyword>
<keyword id="KW-0472">Membrane</keyword>
<keyword id="KW-1185">Reference proteome</keyword>
<keyword id="KW-0813">Transport</keyword>